<accession>A3M665</accession>
<name>ISPF_ACIBT</name>
<proteinExistence type="inferred from homology"/>
<evidence type="ECO:0000255" key="1">
    <source>
        <dbReference type="HAMAP-Rule" id="MF_00107"/>
    </source>
</evidence>
<reference key="1">
    <citation type="journal article" date="2007" name="Genes Dev.">
        <title>New insights into Acinetobacter baumannii pathogenesis revealed by high-density pyrosequencing and transposon mutagenesis.</title>
        <authorList>
            <person name="Smith M.G."/>
            <person name="Gianoulis T.A."/>
            <person name="Pukatzki S."/>
            <person name="Mekalanos J.J."/>
            <person name="Ornston L.N."/>
            <person name="Gerstein M."/>
            <person name="Snyder M."/>
        </authorList>
    </citation>
    <scope>NUCLEOTIDE SEQUENCE [LARGE SCALE GENOMIC DNA]</scope>
    <source>
        <strain>ATCC 17978 / DSM 105126 / CIP 53.77 / LMG 1025 / NCDC KC755 / 5377</strain>
    </source>
</reference>
<organism>
    <name type="scientific">Acinetobacter baumannii (strain ATCC 17978 / DSM 105126 / CIP 53.77 / LMG 1025 / NCDC KC755 / 5377)</name>
    <dbReference type="NCBI Taxonomy" id="400667"/>
    <lineage>
        <taxon>Bacteria</taxon>
        <taxon>Pseudomonadati</taxon>
        <taxon>Pseudomonadota</taxon>
        <taxon>Gammaproteobacteria</taxon>
        <taxon>Moraxellales</taxon>
        <taxon>Moraxellaceae</taxon>
        <taxon>Acinetobacter</taxon>
        <taxon>Acinetobacter calcoaceticus/baumannii complex</taxon>
    </lineage>
</organism>
<comment type="function">
    <text evidence="1">Involved in the biosynthesis of isopentenyl diphosphate (IPP) and dimethylallyl diphosphate (DMAPP), two major building blocks of isoprenoid compounds. Catalyzes the conversion of 4-diphosphocytidyl-2-C-methyl-D-erythritol 2-phosphate (CDP-ME2P) to 2-C-methyl-D-erythritol 2,4-cyclodiphosphate (ME-CPP) with a corresponding release of cytidine 5-monophosphate (CMP).</text>
</comment>
<comment type="catalytic activity">
    <reaction evidence="1">
        <text>4-CDP-2-C-methyl-D-erythritol 2-phosphate = 2-C-methyl-D-erythritol 2,4-cyclic diphosphate + CMP</text>
        <dbReference type="Rhea" id="RHEA:23864"/>
        <dbReference type="ChEBI" id="CHEBI:57919"/>
        <dbReference type="ChEBI" id="CHEBI:58483"/>
        <dbReference type="ChEBI" id="CHEBI:60377"/>
        <dbReference type="EC" id="4.6.1.12"/>
    </reaction>
</comment>
<comment type="cofactor">
    <cofactor evidence="1">
        <name>a divalent metal cation</name>
        <dbReference type="ChEBI" id="CHEBI:60240"/>
    </cofactor>
    <text evidence="1">Binds 1 divalent metal cation per subunit.</text>
</comment>
<comment type="pathway">
    <text evidence="1">Isoprenoid biosynthesis; isopentenyl diphosphate biosynthesis via DXP pathway; isopentenyl diphosphate from 1-deoxy-D-xylulose 5-phosphate: step 4/6.</text>
</comment>
<comment type="subunit">
    <text evidence="1">Homotrimer.</text>
</comment>
<comment type="similarity">
    <text evidence="1">Belongs to the IspF family.</text>
</comment>
<gene>
    <name evidence="1" type="primary">ispF</name>
    <name type="ordered locus">A1S_1982</name>
</gene>
<feature type="chain" id="PRO_1000094234" description="2-C-methyl-D-erythritol 2,4-cyclodiphosphate synthase">
    <location>
        <begin position="1"/>
        <end position="160"/>
    </location>
</feature>
<feature type="binding site" evidence="1">
    <location>
        <begin position="12"/>
        <end position="14"/>
    </location>
    <ligand>
        <name>4-CDP-2-C-methyl-D-erythritol 2-phosphate</name>
        <dbReference type="ChEBI" id="CHEBI:57919"/>
    </ligand>
</feature>
<feature type="binding site" evidence="1">
    <location>
        <position position="12"/>
    </location>
    <ligand>
        <name>a divalent metal cation</name>
        <dbReference type="ChEBI" id="CHEBI:60240"/>
    </ligand>
</feature>
<feature type="binding site" evidence="1">
    <location>
        <position position="14"/>
    </location>
    <ligand>
        <name>a divalent metal cation</name>
        <dbReference type="ChEBI" id="CHEBI:60240"/>
    </ligand>
</feature>
<feature type="binding site" evidence="1">
    <location>
        <begin position="38"/>
        <end position="39"/>
    </location>
    <ligand>
        <name>4-CDP-2-C-methyl-D-erythritol 2-phosphate</name>
        <dbReference type="ChEBI" id="CHEBI:57919"/>
    </ligand>
</feature>
<feature type="binding site" evidence="1">
    <location>
        <position position="46"/>
    </location>
    <ligand>
        <name>a divalent metal cation</name>
        <dbReference type="ChEBI" id="CHEBI:60240"/>
    </ligand>
</feature>
<feature type="binding site" evidence="1">
    <location>
        <begin position="60"/>
        <end position="62"/>
    </location>
    <ligand>
        <name>4-CDP-2-C-methyl-D-erythritol 2-phosphate</name>
        <dbReference type="ChEBI" id="CHEBI:57919"/>
    </ligand>
</feature>
<feature type="binding site" evidence="1">
    <location>
        <begin position="65"/>
        <end position="69"/>
    </location>
    <ligand>
        <name>4-CDP-2-C-methyl-D-erythritol 2-phosphate</name>
        <dbReference type="ChEBI" id="CHEBI:57919"/>
    </ligand>
</feature>
<feature type="binding site" evidence="1">
    <location>
        <begin position="136"/>
        <end position="139"/>
    </location>
    <ligand>
        <name>4-CDP-2-C-methyl-D-erythritol 2-phosphate</name>
        <dbReference type="ChEBI" id="CHEBI:57919"/>
    </ligand>
</feature>
<feature type="binding site" evidence="1">
    <location>
        <position position="143"/>
    </location>
    <ligand>
        <name>4-CDP-2-C-methyl-D-erythritol 2-phosphate</name>
        <dbReference type="ChEBI" id="CHEBI:57919"/>
    </ligand>
</feature>
<feature type="binding site" evidence="1">
    <location>
        <position position="146"/>
    </location>
    <ligand>
        <name>4-CDP-2-C-methyl-D-erythritol 2-phosphate</name>
        <dbReference type="ChEBI" id="CHEBI:57919"/>
    </ligand>
</feature>
<feature type="site" description="Transition state stabilizer" evidence="1">
    <location>
        <position position="38"/>
    </location>
</feature>
<feature type="site" description="Transition state stabilizer" evidence="1">
    <location>
        <position position="137"/>
    </location>
</feature>
<sequence>MVAQIRIGQGMDVHAFEEGNFVTLAGVQIPHTHGLKAHSDGDVVLHALCDALLGALALGDIGQHFPDTDPEFKGADSRVLLKHVYQLILDRGYHLNNADITVACERPKLAKYNLEMRQSIADVLNVDLNQISIKATTTEKLGFTGRQEGILATATVLISH</sequence>
<dbReference type="EC" id="4.6.1.12" evidence="1"/>
<dbReference type="EMBL" id="CP000521">
    <property type="protein sequence ID" value="ABO12409.2"/>
    <property type="molecule type" value="Genomic_DNA"/>
</dbReference>
<dbReference type="RefSeq" id="WP_000226512.1">
    <property type="nucleotide sequence ID" value="NZ_CP053098.1"/>
</dbReference>
<dbReference type="SMR" id="A3M665"/>
<dbReference type="GeneID" id="92894244"/>
<dbReference type="KEGG" id="acb:A1S_1982"/>
<dbReference type="HOGENOM" id="CLU_084630_2_0_6"/>
<dbReference type="UniPathway" id="UPA00056">
    <property type="reaction ID" value="UER00095"/>
</dbReference>
<dbReference type="GO" id="GO:0008685">
    <property type="term" value="F:2-C-methyl-D-erythritol 2,4-cyclodiphosphate synthase activity"/>
    <property type="evidence" value="ECO:0007669"/>
    <property type="project" value="UniProtKB-UniRule"/>
</dbReference>
<dbReference type="GO" id="GO:0046872">
    <property type="term" value="F:metal ion binding"/>
    <property type="evidence" value="ECO:0007669"/>
    <property type="project" value="UniProtKB-KW"/>
</dbReference>
<dbReference type="GO" id="GO:0019288">
    <property type="term" value="P:isopentenyl diphosphate biosynthetic process, methylerythritol 4-phosphate pathway"/>
    <property type="evidence" value="ECO:0007669"/>
    <property type="project" value="UniProtKB-UniRule"/>
</dbReference>
<dbReference type="GO" id="GO:0016114">
    <property type="term" value="P:terpenoid biosynthetic process"/>
    <property type="evidence" value="ECO:0007669"/>
    <property type="project" value="InterPro"/>
</dbReference>
<dbReference type="CDD" id="cd00554">
    <property type="entry name" value="MECDP_synthase"/>
    <property type="match status" value="1"/>
</dbReference>
<dbReference type="FunFam" id="3.30.1330.50:FF:000001">
    <property type="entry name" value="2-C-methyl-D-erythritol 2,4-cyclodiphosphate synthase"/>
    <property type="match status" value="1"/>
</dbReference>
<dbReference type="Gene3D" id="3.30.1330.50">
    <property type="entry name" value="2-C-methyl-D-erythritol 2,4-cyclodiphosphate synthase"/>
    <property type="match status" value="1"/>
</dbReference>
<dbReference type="HAMAP" id="MF_00107">
    <property type="entry name" value="IspF"/>
    <property type="match status" value="1"/>
</dbReference>
<dbReference type="InterPro" id="IPR003526">
    <property type="entry name" value="MECDP_synthase"/>
</dbReference>
<dbReference type="InterPro" id="IPR020555">
    <property type="entry name" value="MECDP_synthase_CS"/>
</dbReference>
<dbReference type="InterPro" id="IPR036571">
    <property type="entry name" value="MECDP_synthase_sf"/>
</dbReference>
<dbReference type="NCBIfam" id="TIGR00151">
    <property type="entry name" value="ispF"/>
    <property type="match status" value="1"/>
</dbReference>
<dbReference type="PANTHER" id="PTHR43181">
    <property type="entry name" value="2-C-METHYL-D-ERYTHRITOL 2,4-CYCLODIPHOSPHATE SYNTHASE, CHLOROPLASTIC"/>
    <property type="match status" value="1"/>
</dbReference>
<dbReference type="PANTHER" id="PTHR43181:SF1">
    <property type="entry name" value="2-C-METHYL-D-ERYTHRITOL 2,4-CYCLODIPHOSPHATE SYNTHASE, CHLOROPLASTIC"/>
    <property type="match status" value="1"/>
</dbReference>
<dbReference type="Pfam" id="PF02542">
    <property type="entry name" value="YgbB"/>
    <property type="match status" value="1"/>
</dbReference>
<dbReference type="SUPFAM" id="SSF69765">
    <property type="entry name" value="IpsF-like"/>
    <property type="match status" value="1"/>
</dbReference>
<dbReference type="PROSITE" id="PS01350">
    <property type="entry name" value="ISPF"/>
    <property type="match status" value="1"/>
</dbReference>
<keyword id="KW-0414">Isoprene biosynthesis</keyword>
<keyword id="KW-0456">Lyase</keyword>
<keyword id="KW-0479">Metal-binding</keyword>
<protein>
    <recommendedName>
        <fullName evidence="1">2-C-methyl-D-erythritol 2,4-cyclodiphosphate synthase</fullName>
        <shortName evidence="1">MECDP-synthase</shortName>
        <shortName evidence="1">MECPP-synthase</shortName>
        <shortName evidence="1">MECPS</shortName>
        <ecNumber evidence="1">4.6.1.12</ecNumber>
    </recommendedName>
</protein>